<keyword id="KW-0031">Aminopeptidase</keyword>
<keyword id="KW-0963">Cytoplasm</keyword>
<keyword id="KW-0378">Hydrolase</keyword>
<keyword id="KW-0479">Metal-binding</keyword>
<keyword id="KW-0645">Protease</keyword>
<keyword id="KW-1185">Reference proteome</keyword>
<protein>
    <recommendedName>
        <fullName evidence="1">Methionine aminopeptidase 2</fullName>
        <shortName evidence="1">MAP 2</shortName>
        <shortName evidence="1">MetAP 2</shortName>
        <ecNumber evidence="1">3.4.11.18</ecNumber>
    </recommendedName>
    <alternativeName>
        <fullName evidence="1">Peptidase M</fullName>
    </alternativeName>
</protein>
<accession>A8QBZ2</accession>
<feature type="chain" id="PRO_0000407657" description="Methionine aminopeptidase 2">
    <location>
        <begin position="1"/>
        <end position="448"/>
    </location>
</feature>
<feature type="region of interest" description="Disordered" evidence="2">
    <location>
        <begin position="1"/>
        <end position="87"/>
    </location>
</feature>
<feature type="compositionally biased region" description="Low complexity" evidence="2">
    <location>
        <begin position="1"/>
        <end position="17"/>
    </location>
</feature>
<feature type="compositionally biased region" description="Basic and acidic residues" evidence="2">
    <location>
        <begin position="21"/>
        <end position="34"/>
    </location>
</feature>
<feature type="compositionally biased region" description="Acidic residues" evidence="2">
    <location>
        <begin position="35"/>
        <end position="46"/>
    </location>
</feature>
<feature type="compositionally biased region" description="Basic residues" evidence="2">
    <location>
        <begin position="55"/>
        <end position="71"/>
    </location>
</feature>
<feature type="binding site" evidence="1">
    <location>
        <position position="200"/>
    </location>
    <ligand>
        <name>substrate</name>
    </ligand>
</feature>
<feature type="binding site" evidence="1">
    <location>
        <position position="220"/>
    </location>
    <ligand>
        <name>a divalent metal cation</name>
        <dbReference type="ChEBI" id="CHEBI:60240"/>
        <label>1</label>
    </ligand>
</feature>
<feature type="binding site" evidence="1">
    <location>
        <position position="231"/>
    </location>
    <ligand>
        <name>a divalent metal cation</name>
        <dbReference type="ChEBI" id="CHEBI:60240"/>
        <label>1</label>
    </ligand>
</feature>
<feature type="binding site" evidence="1">
    <location>
        <position position="231"/>
    </location>
    <ligand>
        <name>a divalent metal cation</name>
        <dbReference type="ChEBI" id="CHEBI:60240"/>
        <label>2</label>
        <note>catalytic</note>
    </ligand>
</feature>
<feature type="binding site" evidence="1">
    <location>
        <position position="300"/>
    </location>
    <ligand>
        <name>a divalent metal cation</name>
        <dbReference type="ChEBI" id="CHEBI:60240"/>
        <label>2</label>
        <note>catalytic</note>
    </ligand>
</feature>
<feature type="binding site" evidence="1">
    <location>
        <position position="308"/>
    </location>
    <ligand>
        <name>substrate</name>
    </ligand>
</feature>
<feature type="binding site" evidence="1">
    <location>
        <position position="334"/>
    </location>
    <ligand>
        <name>a divalent metal cation</name>
        <dbReference type="ChEBI" id="CHEBI:60240"/>
        <label>2</label>
        <note>catalytic</note>
    </ligand>
</feature>
<feature type="binding site" evidence="1">
    <location>
        <position position="429"/>
    </location>
    <ligand>
        <name>a divalent metal cation</name>
        <dbReference type="ChEBI" id="CHEBI:60240"/>
        <label>1</label>
    </ligand>
</feature>
<feature type="binding site" evidence="1">
    <location>
        <position position="429"/>
    </location>
    <ligand>
        <name>a divalent metal cation</name>
        <dbReference type="ChEBI" id="CHEBI:60240"/>
        <label>2</label>
        <note>catalytic</note>
    </ligand>
</feature>
<dbReference type="EC" id="3.4.11.18" evidence="1"/>
<dbReference type="EMBL" id="AAYY01000016">
    <property type="protein sequence ID" value="EDP41747.1"/>
    <property type="molecule type" value="Genomic_DNA"/>
</dbReference>
<dbReference type="RefSeq" id="XP_001728961.1">
    <property type="nucleotide sequence ID" value="XM_001728909.1"/>
</dbReference>
<dbReference type="SMR" id="A8QBZ2"/>
<dbReference type="FunCoup" id="A8QBZ2">
    <property type="interactions" value="657"/>
</dbReference>
<dbReference type="STRING" id="425265.A8QBZ2"/>
<dbReference type="GeneID" id="5853267"/>
<dbReference type="KEGG" id="mgl:MGL_3955"/>
<dbReference type="VEuPathDB" id="FungiDB:MGL_3955"/>
<dbReference type="InParanoid" id="A8QBZ2"/>
<dbReference type="OMA" id="PFAKRWL"/>
<dbReference type="OrthoDB" id="7848262at2759"/>
<dbReference type="Proteomes" id="UP000008837">
    <property type="component" value="Unassembled WGS sequence"/>
</dbReference>
<dbReference type="GO" id="GO:0005737">
    <property type="term" value="C:cytoplasm"/>
    <property type="evidence" value="ECO:0007669"/>
    <property type="project" value="UniProtKB-SubCell"/>
</dbReference>
<dbReference type="GO" id="GO:0004239">
    <property type="term" value="F:initiator methionyl aminopeptidase activity"/>
    <property type="evidence" value="ECO:0007669"/>
    <property type="project" value="UniProtKB-UniRule"/>
</dbReference>
<dbReference type="GO" id="GO:0046872">
    <property type="term" value="F:metal ion binding"/>
    <property type="evidence" value="ECO:0007669"/>
    <property type="project" value="UniProtKB-UniRule"/>
</dbReference>
<dbReference type="GO" id="GO:0070006">
    <property type="term" value="F:metalloaminopeptidase activity"/>
    <property type="evidence" value="ECO:0007669"/>
    <property type="project" value="UniProtKB-UniRule"/>
</dbReference>
<dbReference type="GO" id="GO:0006508">
    <property type="term" value="P:proteolysis"/>
    <property type="evidence" value="ECO:0007669"/>
    <property type="project" value="UniProtKB-KW"/>
</dbReference>
<dbReference type="CDD" id="cd01088">
    <property type="entry name" value="MetAP2"/>
    <property type="match status" value="1"/>
</dbReference>
<dbReference type="Gene3D" id="3.90.230.10">
    <property type="entry name" value="Creatinase/methionine aminopeptidase superfamily"/>
    <property type="match status" value="1"/>
</dbReference>
<dbReference type="Gene3D" id="1.10.10.10">
    <property type="entry name" value="Winged helix-like DNA-binding domain superfamily/Winged helix DNA-binding domain"/>
    <property type="match status" value="1"/>
</dbReference>
<dbReference type="HAMAP" id="MF_03175">
    <property type="entry name" value="MetAP_2_euk"/>
    <property type="match status" value="1"/>
</dbReference>
<dbReference type="InterPro" id="IPR036005">
    <property type="entry name" value="Creatinase/aminopeptidase-like"/>
</dbReference>
<dbReference type="InterPro" id="IPR050247">
    <property type="entry name" value="Met_Aminopeptidase_Type2"/>
</dbReference>
<dbReference type="InterPro" id="IPR000994">
    <property type="entry name" value="Pept_M24"/>
</dbReference>
<dbReference type="InterPro" id="IPR001714">
    <property type="entry name" value="Pept_M24_MAP"/>
</dbReference>
<dbReference type="InterPro" id="IPR002468">
    <property type="entry name" value="Pept_M24A_MAP2"/>
</dbReference>
<dbReference type="InterPro" id="IPR036388">
    <property type="entry name" value="WH-like_DNA-bd_sf"/>
</dbReference>
<dbReference type="InterPro" id="IPR036390">
    <property type="entry name" value="WH_DNA-bd_sf"/>
</dbReference>
<dbReference type="NCBIfam" id="TIGR00501">
    <property type="entry name" value="met_pdase_II"/>
    <property type="match status" value="1"/>
</dbReference>
<dbReference type="PANTHER" id="PTHR45777">
    <property type="entry name" value="METHIONINE AMINOPEPTIDASE 2"/>
    <property type="match status" value="1"/>
</dbReference>
<dbReference type="PANTHER" id="PTHR45777:SF2">
    <property type="entry name" value="METHIONINE AMINOPEPTIDASE 2"/>
    <property type="match status" value="1"/>
</dbReference>
<dbReference type="Pfam" id="PF00557">
    <property type="entry name" value="Peptidase_M24"/>
    <property type="match status" value="1"/>
</dbReference>
<dbReference type="PRINTS" id="PR00599">
    <property type="entry name" value="MAPEPTIDASE"/>
</dbReference>
<dbReference type="SUPFAM" id="SSF55920">
    <property type="entry name" value="Creatinase/aminopeptidase"/>
    <property type="match status" value="1"/>
</dbReference>
<dbReference type="SUPFAM" id="SSF46785">
    <property type="entry name" value="Winged helix' DNA-binding domain"/>
    <property type="match status" value="1"/>
</dbReference>
<sequence length="448" mass="49566">MPATAEAADAATQATDAFSTKLEENKLPEGQERGPEEEEDDDDDETPAPGDAEKKKKKKKKSGAKKKKSKTAKAVMEQTEPPSIGLTKMFPNGVFPVGEVQQYDETKFDESRKRVTGEELRERERLIQEKDGFNYNFIRRAAEVHRQVRQYAQRTIKPGMSMTEIANMIEDGTRALVEVNGFESGIGFPTGLSLNEVAAHYTPNAGDKRILQSGDVLKVDFGVQVKGRIVDSAFTMNFEPTYDPLLAAVRAATNTGVKEAGIDARLGEVGAAIQEVMESHEFEAEGKTHQVKCIRNLQGHDIAPYRIHGGKSVPIVAVPNLDVKMEEGETFAIETFGSTGRGYVVDSGECSHYARQANPPHVSLRINSARQLLYTINKNFGSLPFCRRYLDRLGEQNYLLGLRHLVSQGVVQDYPPLADVPGCMTAQFEHTILLRPTCKEVVSRGDDY</sequence>
<name>MAP2_MALGO</name>
<organism>
    <name type="scientific">Malassezia globosa (strain ATCC MYA-4612 / CBS 7966)</name>
    <name type="common">Dandruff-associated fungus</name>
    <dbReference type="NCBI Taxonomy" id="425265"/>
    <lineage>
        <taxon>Eukaryota</taxon>
        <taxon>Fungi</taxon>
        <taxon>Dikarya</taxon>
        <taxon>Basidiomycota</taxon>
        <taxon>Ustilaginomycotina</taxon>
        <taxon>Malasseziomycetes</taxon>
        <taxon>Malasseziales</taxon>
        <taxon>Malasseziaceae</taxon>
        <taxon>Malassezia</taxon>
    </lineage>
</organism>
<evidence type="ECO:0000255" key="1">
    <source>
        <dbReference type="HAMAP-Rule" id="MF_03175"/>
    </source>
</evidence>
<evidence type="ECO:0000256" key="2">
    <source>
        <dbReference type="SAM" id="MobiDB-lite"/>
    </source>
</evidence>
<proteinExistence type="inferred from homology"/>
<gene>
    <name type="ORF">MGL_3955</name>
</gene>
<comment type="function">
    <text evidence="1">Cotranslationally removes the N-terminal methionine from nascent proteins. The N-terminal methionine is often cleaved when the second residue in the primary sequence is small and uncharged (Met-Ala-, Cys, Gly, Pro, Ser, Thr, or Val).</text>
</comment>
<comment type="catalytic activity">
    <reaction evidence="1">
        <text>Release of N-terminal amino acids, preferentially methionine, from peptides and arylamides.</text>
        <dbReference type="EC" id="3.4.11.18"/>
    </reaction>
</comment>
<comment type="cofactor">
    <cofactor evidence="1">
        <name>Co(2+)</name>
        <dbReference type="ChEBI" id="CHEBI:48828"/>
    </cofactor>
    <cofactor evidence="1">
        <name>Zn(2+)</name>
        <dbReference type="ChEBI" id="CHEBI:29105"/>
    </cofactor>
    <cofactor evidence="1">
        <name>Mn(2+)</name>
        <dbReference type="ChEBI" id="CHEBI:29035"/>
    </cofactor>
    <cofactor evidence="1">
        <name>Fe(2+)</name>
        <dbReference type="ChEBI" id="CHEBI:29033"/>
    </cofactor>
    <text evidence="1">Binds 2 divalent metal cations per subunit. Has a high-affinity and a low affinity metal-binding site. The true nature of the physiological cofactor is under debate. The enzyme is active with cobalt, zinc, manganese or divalent iron ions. Most likely, methionine aminopeptidases function as mononuclear Fe(2+)-metalloproteases under physiological conditions, and the catalytically relevant metal-binding site has been assigned to the histidine-containing high-affinity site.</text>
</comment>
<comment type="subcellular location">
    <subcellularLocation>
        <location evidence="1">Cytoplasm</location>
    </subcellularLocation>
</comment>
<comment type="similarity">
    <text evidence="1">Belongs to the peptidase M24A family. Methionine aminopeptidase eukaryotic type 2 subfamily.</text>
</comment>
<reference key="1">
    <citation type="journal article" date="2007" name="Proc. Natl. Acad. Sci. U.S.A.">
        <title>Dandruff-associated Malassezia genomes reveal convergent and divergent virulence traits shared with plant and human fungal pathogens.</title>
        <authorList>
            <person name="Xu J."/>
            <person name="Saunders C.W."/>
            <person name="Hu P."/>
            <person name="Grant R.A."/>
            <person name="Boekhout T."/>
            <person name="Kuramae E.E."/>
            <person name="Kronstad J.W."/>
            <person name="DeAngelis Y.M."/>
            <person name="Reeder N.L."/>
            <person name="Johnstone K.R."/>
            <person name="Leland M."/>
            <person name="Fieno A.M."/>
            <person name="Begley W.M."/>
            <person name="Sun Y."/>
            <person name="Lacey M.P."/>
            <person name="Chaudhary T."/>
            <person name="Keough T."/>
            <person name="Chu L."/>
            <person name="Sears R."/>
            <person name="Yuan B."/>
            <person name="Dawson T.L. Jr."/>
        </authorList>
    </citation>
    <scope>NUCLEOTIDE SEQUENCE [LARGE SCALE GENOMIC DNA]</scope>
    <source>
        <strain>ATCC MYA-4612 / CBS 7966</strain>
    </source>
</reference>